<accession>P43688</accession>
<comment type="function">
    <text evidence="1 4 5">Acts as a transcriptional activator (By similarity). In conjunction with NKX2-5, may play a role in both pharyngeal and cardiac embryonic development (PubMed:10733590, PubMed:11390666).</text>
</comment>
<comment type="subcellular location">
    <subcellularLocation>
        <location evidence="8">Nucleus</location>
    </subcellularLocation>
</comment>
<comment type="tissue specificity">
    <text evidence="4">Not detected in any neonate or adult tissues.</text>
</comment>
<comment type="developmental stage">
    <text evidence="6 7">Expressed in developing gut endoderm, cardiac progenitors and heart. Expression restricted to the very narrow development period between stages 8.0 and 11.5 dpc. First detected at 8.0 dpc in the endoderm of the lateral walls and lip of the forming foregut pocket, directly juxtaposed to cardiogenic mesoderm. At 8.5 dpc, expressed in the forming pharynx, predominantly in its lateral aspects where pouches will form. From 8.5 to 11.5 dpc, expressed in the ventrolateral endoderm of all forming pouches, as well as in juxtaposed arch ectoderm and mesenchyme. Expression levels decrease as pouches matured. Also expressed in the ventral hindgut endoderm from 9.5 dpc and in a short segment at the foregut-midgut junction spanning the proximal parts of the common bile and pancreatic ducts.</text>
</comment>
<comment type="disruption phenotype">
    <text evidence="4 5">No visible phenotype; possibly due to the redundancy with NKX2-6. Mutant mice are viable and fertile. No obvious abnormalities in the caudal pharyngeal pouch derivatives (thymus, parathyroid glands, and thyroid gland), heart and gut. In NKX2-5 and NKX2-6 double mutants, the pharynx does not form properly and the development of the atrium is less advanced.</text>
</comment>
<comment type="similarity">
    <text evidence="8">Belongs to the NK-2 homeobox family.</text>
</comment>
<evidence type="ECO:0000250" key="1">
    <source>
        <dbReference type="UniProtKB" id="A6NCS4"/>
    </source>
</evidence>
<evidence type="ECO:0000255" key="2">
    <source>
        <dbReference type="PROSITE-ProRule" id="PRU00108"/>
    </source>
</evidence>
<evidence type="ECO:0000256" key="3">
    <source>
        <dbReference type="SAM" id="MobiDB-lite"/>
    </source>
</evidence>
<evidence type="ECO:0000269" key="4">
    <source>
    </source>
</evidence>
<evidence type="ECO:0000269" key="5">
    <source>
    </source>
</evidence>
<evidence type="ECO:0000269" key="6">
    <source>
    </source>
</evidence>
<evidence type="ECO:0000269" key="7">
    <source>
    </source>
</evidence>
<evidence type="ECO:0000305" key="8"/>
<reference key="1">
    <citation type="journal article" date="1998" name="Mech. Dev.">
        <title>Expression of NK-2 class homeobox gene Nkx2-6 in foregut endoderm and heart.</title>
        <authorList>
            <person name="Biben C."/>
            <person name="Hatzistavrou T."/>
            <person name="Wang C.-C."/>
            <person name="Harvey R.P."/>
        </authorList>
    </citation>
    <scope>NUCLEOTIDE SEQUENCE [MRNA]</scope>
    <scope>DEVELOPMENTAL STAGE</scope>
    <source>
        <strain>BALB/cJ</strain>
    </source>
</reference>
<reference key="2">
    <citation type="journal article" date="1993" name="Development">
        <title>Nkx-2.5: a novel murine homeobox gene expressed in early heart progenitor cells and their myogenic descendants.</title>
        <authorList>
            <person name="Lints T.J."/>
            <person name="Parsons L.M."/>
            <person name="Hartley L."/>
            <person name="Lyons I."/>
            <person name="Harvey R.P."/>
        </authorList>
    </citation>
    <scope>NUCLEOTIDE SEQUENCE [MRNA] OF 123-214</scope>
    <source>
        <tissue>Heart</tissue>
    </source>
</reference>
<reference key="3">
    <citation type="journal article" date="1997" name="Mech. Dev.">
        <title>Nkx2.6 expression is transiently and specifically restricted to the branchial region of pharyngeal-stage mouse embryos.</title>
        <authorList>
            <person name="Nikolova M."/>
            <person name="Chen X."/>
            <person name="Lufkin T."/>
        </authorList>
    </citation>
    <scope>DEVELOPMENTAL STAGE</scope>
</reference>
<reference key="4">
    <citation type="journal article" date="2000" name="Mol. Cell. Biol.">
        <title>Phenotypic characterization of the murine Nkx2.6 homeobox gene by gene targeting.</title>
        <authorList>
            <person name="Tanaka M."/>
            <person name="Yamasaki N."/>
            <person name="Izumo S."/>
        </authorList>
    </citation>
    <scope>FUNCTION</scope>
    <scope>TISSUE SPECIFICITY</scope>
    <scope>DISRUPTION PHENOTYPE</scope>
</reference>
<reference key="5">
    <citation type="journal article" date="2001" name="Mol. Cell. Biol.">
        <title>Nkx2.5 and Nkx2.6, homologs of Drosophila tinman, are required for development of the pharynx.</title>
        <authorList>
            <person name="Tanaka M."/>
            <person name="Schinke M."/>
            <person name="Liao H.S."/>
            <person name="Yamasaki N."/>
            <person name="Izumo S."/>
        </authorList>
    </citation>
    <scope>FUNCTION</scope>
    <scope>DISRUPTION PHENOTYPE</scope>
</reference>
<dbReference type="EMBL" id="AF045150">
    <property type="protein sequence ID" value="AAC15674.1"/>
    <property type="molecule type" value="mRNA"/>
</dbReference>
<dbReference type="CCDS" id="CCDS56968.1"/>
<dbReference type="RefSeq" id="NP_035050.2">
    <property type="nucleotide sequence ID" value="NM_010920.2"/>
</dbReference>
<dbReference type="SMR" id="P43688"/>
<dbReference type="FunCoup" id="P43688">
    <property type="interactions" value="496"/>
</dbReference>
<dbReference type="STRING" id="10090.ENSMUSP00000049898"/>
<dbReference type="iPTMnet" id="P43688"/>
<dbReference type="PhosphoSitePlus" id="P43688"/>
<dbReference type="PaxDb" id="10090-ENSMUSP00000049898"/>
<dbReference type="ProteomicsDB" id="287430"/>
<dbReference type="Antibodypedia" id="58740">
    <property type="antibodies" value="163 antibodies from 28 providers"/>
</dbReference>
<dbReference type="DNASU" id="18092"/>
<dbReference type="Ensembl" id="ENSMUST00000062437.10">
    <property type="protein sequence ID" value="ENSMUSP00000049898.9"/>
    <property type="gene ID" value="ENSMUSG00000044186.11"/>
</dbReference>
<dbReference type="GeneID" id="18092"/>
<dbReference type="KEGG" id="mmu:18092"/>
<dbReference type="UCSC" id="uc007umb.2">
    <property type="organism name" value="mouse"/>
</dbReference>
<dbReference type="AGR" id="MGI:97351"/>
<dbReference type="CTD" id="137814"/>
<dbReference type="MGI" id="MGI:97351">
    <property type="gene designation" value="Nkx2-6"/>
</dbReference>
<dbReference type="VEuPathDB" id="HostDB:ENSMUSG00000044186"/>
<dbReference type="eggNOG" id="KOG0842">
    <property type="taxonomic scope" value="Eukaryota"/>
</dbReference>
<dbReference type="GeneTree" id="ENSGT00940000162737"/>
<dbReference type="HOGENOM" id="CLU_049543_0_0_1"/>
<dbReference type="InParanoid" id="P43688"/>
<dbReference type="OMA" id="YPCYGAP"/>
<dbReference type="OrthoDB" id="6159439at2759"/>
<dbReference type="PhylomeDB" id="P43688"/>
<dbReference type="TreeFam" id="TF351204"/>
<dbReference type="BioGRID-ORCS" id="18092">
    <property type="hits" value="2 hits in 77 CRISPR screens"/>
</dbReference>
<dbReference type="PRO" id="PR:P43688"/>
<dbReference type="Proteomes" id="UP000000589">
    <property type="component" value="Chromosome 14"/>
</dbReference>
<dbReference type="RNAct" id="P43688">
    <property type="molecule type" value="protein"/>
</dbReference>
<dbReference type="Bgee" id="ENSMUSG00000044186">
    <property type="expression patterns" value="Expressed in pharyngeal arch 3 and 54 other cell types or tissues"/>
</dbReference>
<dbReference type="GO" id="GO:0005634">
    <property type="term" value="C:nucleus"/>
    <property type="evidence" value="ECO:0007669"/>
    <property type="project" value="UniProtKB-SubCell"/>
</dbReference>
<dbReference type="GO" id="GO:0001228">
    <property type="term" value="F:DNA-binding transcription activator activity, RNA polymerase II-specific"/>
    <property type="evidence" value="ECO:0007669"/>
    <property type="project" value="Ensembl"/>
</dbReference>
<dbReference type="GO" id="GO:0000978">
    <property type="term" value="F:RNA polymerase II cis-regulatory region sequence-specific DNA binding"/>
    <property type="evidence" value="ECO:0007669"/>
    <property type="project" value="Ensembl"/>
</dbReference>
<dbReference type="GO" id="GO:0006915">
    <property type="term" value="P:apoptotic process"/>
    <property type="evidence" value="ECO:0000316"/>
    <property type="project" value="MGI"/>
</dbReference>
<dbReference type="GO" id="GO:0055014">
    <property type="term" value="P:atrial cardiac muscle cell development"/>
    <property type="evidence" value="ECO:0000270"/>
    <property type="project" value="BHF-UCL"/>
</dbReference>
<dbReference type="GO" id="GO:0008283">
    <property type="term" value="P:cell population proliferation"/>
    <property type="evidence" value="ECO:0000316"/>
    <property type="project" value="MGI"/>
</dbReference>
<dbReference type="GO" id="GO:0048565">
    <property type="term" value="P:digestive tract development"/>
    <property type="evidence" value="ECO:0000270"/>
    <property type="project" value="BHF-UCL"/>
</dbReference>
<dbReference type="GO" id="GO:0035050">
    <property type="term" value="P:embryonic heart tube development"/>
    <property type="evidence" value="ECO:0000270"/>
    <property type="project" value="BHF-UCL"/>
</dbReference>
<dbReference type="GO" id="GO:1904019">
    <property type="term" value="P:epithelial cell apoptotic process"/>
    <property type="evidence" value="ECO:0000316"/>
    <property type="project" value="MGI"/>
</dbReference>
<dbReference type="GO" id="GO:0030855">
    <property type="term" value="P:epithelial cell differentiation"/>
    <property type="evidence" value="ECO:0000316"/>
    <property type="project" value="MGI"/>
</dbReference>
<dbReference type="GO" id="GO:0050673">
    <property type="term" value="P:epithelial cell proliferation"/>
    <property type="evidence" value="ECO:0000316"/>
    <property type="project" value="MGI"/>
</dbReference>
<dbReference type="GO" id="GO:0007507">
    <property type="term" value="P:heart development"/>
    <property type="evidence" value="ECO:0000316"/>
    <property type="project" value="MGI"/>
</dbReference>
<dbReference type="GO" id="GO:0021854">
    <property type="term" value="P:hypothalamus development"/>
    <property type="evidence" value="ECO:0000270"/>
    <property type="project" value="BHF-UCL"/>
</dbReference>
<dbReference type="GO" id="GO:1904036">
    <property type="term" value="P:negative regulation of epithelial cell apoptotic process"/>
    <property type="evidence" value="ECO:0000316"/>
    <property type="project" value="MGI"/>
</dbReference>
<dbReference type="GO" id="GO:0060039">
    <property type="term" value="P:pericardium development"/>
    <property type="evidence" value="ECO:0000270"/>
    <property type="project" value="BHF-UCL"/>
</dbReference>
<dbReference type="GO" id="GO:0060037">
    <property type="term" value="P:pharyngeal system development"/>
    <property type="evidence" value="ECO:0000316"/>
    <property type="project" value="MGI"/>
</dbReference>
<dbReference type="GO" id="GO:0050679">
    <property type="term" value="P:positive regulation of epithelial cell proliferation"/>
    <property type="evidence" value="ECO:0000316"/>
    <property type="project" value="MGI"/>
</dbReference>
<dbReference type="GO" id="GO:0043586">
    <property type="term" value="P:tongue development"/>
    <property type="evidence" value="ECO:0000270"/>
    <property type="project" value="BHF-UCL"/>
</dbReference>
<dbReference type="GO" id="GO:0055015">
    <property type="term" value="P:ventricular cardiac muscle cell development"/>
    <property type="evidence" value="ECO:0000270"/>
    <property type="project" value="BHF-UCL"/>
</dbReference>
<dbReference type="CDD" id="cd00086">
    <property type="entry name" value="homeodomain"/>
    <property type="match status" value="1"/>
</dbReference>
<dbReference type="FunFam" id="1.10.10.60:FF:000532">
    <property type="entry name" value="C. Elegans Homeobox"/>
    <property type="match status" value="1"/>
</dbReference>
<dbReference type="Gene3D" id="1.10.10.60">
    <property type="entry name" value="Homeodomain-like"/>
    <property type="match status" value="1"/>
</dbReference>
<dbReference type="InterPro" id="IPR001356">
    <property type="entry name" value="HD"/>
</dbReference>
<dbReference type="InterPro" id="IPR020479">
    <property type="entry name" value="HD_metazoa"/>
</dbReference>
<dbReference type="InterPro" id="IPR017970">
    <property type="entry name" value="Homeobox_CS"/>
</dbReference>
<dbReference type="InterPro" id="IPR050394">
    <property type="entry name" value="Homeobox_NK-like"/>
</dbReference>
<dbReference type="InterPro" id="IPR009057">
    <property type="entry name" value="Homeodomain-like_sf"/>
</dbReference>
<dbReference type="PANTHER" id="PTHR24340">
    <property type="entry name" value="HOMEOBOX PROTEIN NKX"/>
    <property type="match status" value="1"/>
</dbReference>
<dbReference type="PANTHER" id="PTHR24340:SF72">
    <property type="entry name" value="HOMEOBOX PROTEIN NKX-2.6"/>
    <property type="match status" value="1"/>
</dbReference>
<dbReference type="Pfam" id="PF00046">
    <property type="entry name" value="Homeodomain"/>
    <property type="match status" value="1"/>
</dbReference>
<dbReference type="PRINTS" id="PR00024">
    <property type="entry name" value="HOMEOBOX"/>
</dbReference>
<dbReference type="SMART" id="SM00389">
    <property type="entry name" value="HOX"/>
    <property type="match status" value="1"/>
</dbReference>
<dbReference type="SUPFAM" id="SSF46689">
    <property type="entry name" value="Homeodomain-like"/>
    <property type="match status" value="1"/>
</dbReference>
<dbReference type="PROSITE" id="PS00027">
    <property type="entry name" value="HOMEOBOX_1"/>
    <property type="match status" value="1"/>
</dbReference>
<dbReference type="PROSITE" id="PS50071">
    <property type="entry name" value="HOMEOBOX_2"/>
    <property type="match status" value="1"/>
</dbReference>
<name>NKX26_MOUSE</name>
<proteinExistence type="evidence at transcript level"/>
<keyword id="KW-0010">Activator</keyword>
<keyword id="KW-0217">Developmental protein</keyword>
<keyword id="KW-0238">DNA-binding</keyword>
<keyword id="KW-0371">Homeobox</keyword>
<keyword id="KW-0539">Nucleus</keyword>
<keyword id="KW-1185">Reference proteome</keyword>
<keyword id="KW-0804">Transcription</keyword>
<keyword id="KW-0805">Transcription regulation</keyword>
<organism>
    <name type="scientific">Mus musculus</name>
    <name type="common">Mouse</name>
    <dbReference type="NCBI Taxonomy" id="10090"/>
    <lineage>
        <taxon>Eukaryota</taxon>
        <taxon>Metazoa</taxon>
        <taxon>Chordata</taxon>
        <taxon>Craniata</taxon>
        <taxon>Vertebrata</taxon>
        <taxon>Euteleostomi</taxon>
        <taxon>Mammalia</taxon>
        <taxon>Eutheria</taxon>
        <taxon>Euarchontoglires</taxon>
        <taxon>Glires</taxon>
        <taxon>Rodentia</taxon>
        <taxon>Myomorpha</taxon>
        <taxon>Muroidea</taxon>
        <taxon>Muridae</taxon>
        <taxon>Murinae</taxon>
        <taxon>Mus</taxon>
        <taxon>Mus</taxon>
    </lineage>
</organism>
<gene>
    <name type="primary">Nkx2-6</name>
    <name type="synonym">Nkx-2.6</name>
    <name type="synonym">Nkx2f</name>
</gene>
<sequence length="289" mass="31597">MLSSPVASTPFSVADILRLECQQKDSKTLSQWELHRNPVKPRYLRMNQESGWFESSDRAQAVPFRCTWETVLEMGSNPVGEPQTPPGTISRLGARNPMTDRGVGNLSGDMRRGGPVSTRTRPQRKSRVLFSQAQVLALERRFKQQRYLTAPEREHLASALQLTSTQVKIWFQNRRYKSKSQRQDQTLELAGHPLAPRRVAVPVLVLDGKPCLDPDVAAFLGPYKATSPYSCFGGYAGTPYDASYASRCTSASAGPGPLTPLASSGFSPGGQSAAPQGHLPATPQGVTAW</sequence>
<protein>
    <recommendedName>
        <fullName>Homeobox protein Nkx-2.6</fullName>
    </recommendedName>
    <alternativeName>
        <fullName>Homeobox protein NK-2 homolog F</fullName>
    </alternativeName>
</protein>
<feature type="chain" id="PRO_0000048942" description="Homeobox protein Nkx-2.6">
    <location>
        <begin position="1"/>
        <end position="289"/>
    </location>
</feature>
<feature type="DNA-binding region" description="Homeobox" evidence="2">
    <location>
        <begin position="123"/>
        <end position="182"/>
    </location>
</feature>
<feature type="region of interest" description="Disordered" evidence="3">
    <location>
        <begin position="75"/>
        <end position="125"/>
    </location>
</feature>
<feature type="region of interest" description="Disordered" evidence="3">
    <location>
        <begin position="259"/>
        <end position="289"/>
    </location>
</feature>
<feature type="compositionally biased region" description="Polar residues" evidence="3">
    <location>
        <begin position="261"/>
        <end position="274"/>
    </location>
</feature>